<name>SELO_MYCS2</name>
<keyword id="KW-0067">ATP-binding</keyword>
<keyword id="KW-0460">Magnesium</keyword>
<keyword id="KW-0464">Manganese</keyword>
<keyword id="KW-0479">Metal-binding</keyword>
<keyword id="KW-0547">Nucleotide-binding</keyword>
<keyword id="KW-0548">Nucleotidyltransferase</keyword>
<keyword id="KW-1185">Reference proteome</keyword>
<keyword id="KW-0808">Transferase</keyword>
<dbReference type="EC" id="2.7.7.-" evidence="1"/>
<dbReference type="EC" id="2.7.7.108" evidence="1"/>
<dbReference type="EMBL" id="CP000480">
    <property type="protein sequence ID" value="ABK71576.1"/>
    <property type="molecule type" value="Genomic_DNA"/>
</dbReference>
<dbReference type="EMBL" id="CP001663">
    <property type="protein sequence ID" value="AFP38852.1"/>
    <property type="molecule type" value="Genomic_DNA"/>
</dbReference>
<dbReference type="RefSeq" id="WP_011728345.1">
    <property type="nucleotide sequence ID" value="NZ_SIJM01000012.1"/>
</dbReference>
<dbReference type="RefSeq" id="YP_886785.1">
    <property type="nucleotide sequence ID" value="NC_008596.1"/>
</dbReference>
<dbReference type="SMR" id="A0QV47"/>
<dbReference type="STRING" id="246196.MSMEG_2445"/>
<dbReference type="PaxDb" id="246196-MSMEI_2384"/>
<dbReference type="KEGG" id="msb:LJ00_12160"/>
<dbReference type="KEGG" id="msg:MSMEI_2384"/>
<dbReference type="KEGG" id="msm:MSMEG_2445"/>
<dbReference type="PATRIC" id="fig|246196.19.peg.2410"/>
<dbReference type="eggNOG" id="COG0397">
    <property type="taxonomic scope" value="Bacteria"/>
</dbReference>
<dbReference type="OrthoDB" id="9776281at2"/>
<dbReference type="Proteomes" id="UP000000757">
    <property type="component" value="Chromosome"/>
</dbReference>
<dbReference type="Proteomes" id="UP000006158">
    <property type="component" value="Chromosome"/>
</dbReference>
<dbReference type="GO" id="GO:0070733">
    <property type="term" value="F:AMPylase activity"/>
    <property type="evidence" value="ECO:0007669"/>
    <property type="project" value="TreeGrafter"/>
</dbReference>
<dbReference type="GO" id="GO:0005524">
    <property type="term" value="F:ATP binding"/>
    <property type="evidence" value="ECO:0007669"/>
    <property type="project" value="UniProtKB-UniRule"/>
</dbReference>
<dbReference type="GO" id="GO:0000287">
    <property type="term" value="F:magnesium ion binding"/>
    <property type="evidence" value="ECO:0007669"/>
    <property type="project" value="UniProtKB-UniRule"/>
</dbReference>
<dbReference type="HAMAP" id="MF_00692">
    <property type="entry name" value="YdiU_SelO"/>
    <property type="match status" value="1"/>
</dbReference>
<dbReference type="InterPro" id="IPR003846">
    <property type="entry name" value="SelO"/>
</dbReference>
<dbReference type="NCBIfam" id="NF000658">
    <property type="entry name" value="PRK00029.1"/>
    <property type="match status" value="1"/>
</dbReference>
<dbReference type="PANTHER" id="PTHR32057">
    <property type="entry name" value="PROTEIN ADENYLYLTRANSFERASE SELO, MITOCHONDRIAL"/>
    <property type="match status" value="1"/>
</dbReference>
<dbReference type="PANTHER" id="PTHR32057:SF14">
    <property type="entry name" value="PROTEIN ADENYLYLTRANSFERASE SELO, MITOCHONDRIAL"/>
    <property type="match status" value="1"/>
</dbReference>
<dbReference type="Pfam" id="PF02696">
    <property type="entry name" value="SelO"/>
    <property type="match status" value="1"/>
</dbReference>
<protein>
    <recommendedName>
        <fullName evidence="1">Protein nucleotidyltransferase YdiU</fullName>
        <ecNumber evidence="1">2.7.7.-</ecNumber>
    </recommendedName>
    <alternativeName>
        <fullName evidence="1">Protein adenylyltransferase YdiU</fullName>
        <ecNumber evidence="1">2.7.7.108</ecNumber>
    </alternativeName>
    <alternativeName>
        <fullName evidence="1">Protein uridylyltransferase YdiU</fullName>
        <ecNumber evidence="1">2.7.7.-</ecNumber>
    </alternativeName>
</protein>
<gene>
    <name evidence="1" type="primary">ydiU</name>
    <name evidence="1" type="synonym">selO</name>
    <name type="ordered locus">MSMEG_2445</name>
    <name type="ordered locus">MSMEI_2384</name>
</gene>
<accession>A0QV47</accession>
<accession>I7G023</accession>
<comment type="function">
    <text evidence="1">Nucleotidyltransferase involved in the post-translational modification of proteins. It can catalyze the addition of adenosine monophosphate (AMP) or uridine monophosphate (UMP) to a protein, resulting in modifications known as AMPylation and UMPylation.</text>
</comment>
<comment type="catalytic activity">
    <reaction evidence="1">
        <text>L-seryl-[protein] + ATP = 3-O-(5'-adenylyl)-L-seryl-[protein] + diphosphate</text>
        <dbReference type="Rhea" id="RHEA:58120"/>
        <dbReference type="Rhea" id="RHEA-COMP:9863"/>
        <dbReference type="Rhea" id="RHEA-COMP:15073"/>
        <dbReference type="ChEBI" id="CHEBI:29999"/>
        <dbReference type="ChEBI" id="CHEBI:30616"/>
        <dbReference type="ChEBI" id="CHEBI:33019"/>
        <dbReference type="ChEBI" id="CHEBI:142516"/>
        <dbReference type="EC" id="2.7.7.108"/>
    </reaction>
</comment>
<comment type="catalytic activity">
    <reaction evidence="1">
        <text>L-threonyl-[protein] + ATP = 3-O-(5'-adenylyl)-L-threonyl-[protein] + diphosphate</text>
        <dbReference type="Rhea" id="RHEA:54292"/>
        <dbReference type="Rhea" id="RHEA-COMP:11060"/>
        <dbReference type="Rhea" id="RHEA-COMP:13847"/>
        <dbReference type="ChEBI" id="CHEBI:30013"/>
        <dbReference type="ChEBI" id="CHEBI:30616"/>
        <dbReference type="ChEBI" id="CHEBI:33019"/>
        <dbReference type="ChEBI" id="CHEBI:138113"/>
        <dbReference type="EC" id="2.7.7.108"/>
    </reaction>
</comment>
<comment type="catalytic activity">
    <reaction evidence="1">
        <text>L-tyrosyl-[protein] + ATP = O-(5'-adenylyl)-L-tyrosyl-[protein] + diphosphate</text>
        <dbReference type="Rhea" id="RHEA:54288"/>
        <dbReference type="Rhea" id="RHEA-COMP:10136"/>
        <dbReference type="Rhea" id="RHEA-COMP:13846"/>
        <dbReference type="ChEBI" id="CHEBI:30616"/>
        <dbReference type="ChEBI" id="CHEBI:33019"/>
        <dbReference type="ChEBI" id="CHEBI:46858"/>
        <dbReference type="ChEBI" id="CHEBI:83624"/>
        <dbReference type="EC" id="2.7.7.108"/>
    </reaction>
</comment>
<comment type="catalytic activity">
    <reaction evidence="1">
        <text>L-histidyl-[protein] + UTP = N(tele)-(5'-uridylyl)-L-histidyl-[protein] + diphosphate</text>
        <dbReference type="Rhea" id="RHEA:83891"/>
        <dbReference type="Rhea" id="RHEA-COMP:9745"/>
        <dbReference type="Rhea" id="RHEA-COMP:20239"/>
        <dbReference type="ChEBI" id="CHEBI:29979"/>
        <dbReference type="ChEBI" id="CHEBI:33019"/>
        <dbReference type="ChEBI" id="CHEBI:46398"/>
        <dbReference type="ChEBI" id="CHEBI:233474"/>
    </reaction>
</comment>
<comment type="catalytic activity">
    <reaction evidence="1">
        <text>L-seryl-[protein] + UTP = O-(5'-uridylyl)-L-seryl-[protein] + diphosphate</text>
        <dbReference type="Rhea" id="RHEA:64604"/>
        <dbReference type="Rhea" id="RHEA-COMP:9863"/>
        <dbReference type="Rhea" id="RHEA-COMP:16635"/>
        <dbReference type="ChEBI" id="CHEBI:29999"/>
        <dbReference type="ChEBI" id="CHEBI:33019"/>
        <dbReference type="ChEBI" id="CHEBI:46398"/>
        <dbReference type="ChEBI" id="CHEBI:156051"/>
    </reaction>
</comment>
<comment type="catalytic activity">
    <reaction evidence="1">
        <text>L-tyrosyl-[protein] + UTP = O-(5'-uridylyl)-L-tyrosyl-[protein] + diphosphate</text>
        <dbReference type="Rhea" id="RHEA:83887"/>
        <dbReference type="Rhea" id="RHEA-COMP:10136"/>
        <dbReference type="Rhea" id="RHEA-COMP:20238"/>
        <dbReference type="ChEBI" id="CHEBI:33019"/>
        <dbReference type="ChEBI" id="CHEBI:46398"/>
        <dbReference type="ChEBI" id="CHEBI:46858"/>
        <dbReference type="ChEBI" id="CHEBI:90602"/>
    </reaction>
</comment>
<comment type="cofactor">
    <cofactor evidence="1">
        <name>Mg(2+)</name>
        <dbReference type="ChEBI" id="CHEBI:18420"/>
    </cofactor>
    <cofactor evidence="1">
        <name>Mn(2+)</name>
        <dbReference type="ChEBI" id="CHEBI:29035"/>
    </cofactor>
</comment>
<comment type="similarity">
    <text evidence="1">Belongs to the SELO family.</text>
</comment>
<evidence type="ECO:0000255" key="1">
    <source>
        <dbReference type="HAMAP-Rule" id="MF_00692"/>
    </source>
</evidence>
<organism>
    <name type="scientific">Mycolicibacterium smegmatis (strain ATCC 700084 / mc(2)155)</name>
    <name type="common">Mycobacterium smegmatis</name>
    <dbReference type="NCBI Taxonomy" id="246196"/>
    <lineage>
        <taxon>Bacteria</taxon>
        <taxon>Bacillati</taxon>
        <taxon>Actinomycetota</taxon>
        <taxon>Actinomycetes</taxon>
        <taxon>Mycobacteriales</taxon>
        <taxon>Mycobacteriaceae</taxon>
        <taxon>Mycolicibacterium</taxon>
    </lineage>
</organism>
<proteinExistence type="inferred from homology"/>
<feature type="chain" id="PRO_1000083133" description="Protein nucleotidyltransferase YdiU">
    <location>
        <begin position="1"/>
        <end position="484"/>
    </location>
</feature>
<feature type="active site" description="Proton acceptor" evidence="1">
    <location>
        <position position="258"/>
    </location>
</feature>
<feature type="binding site" evidence="1">
    <location>
        <position position="92"/>
    </location>
    <ligand>
        <name>ATP</name>
        <dbReference type="ChEBI" id="CHEBI:30616"/>
    </ligand>
</feature>
<feature type="binding site" evidence="1">
    <location>
        <position position="94"/>
    </location>
    <ligand>
        <name>ATP</name>
        <dbReference type="ChEBI" id="CHEBI:30616"/>
    </ligand>
</feature>
<feature type="binding site" evidence="1">
    <location>
        <position position="95"/>
    </location>
    <ligand>
        <name>ATP</name>
        <dbReference type="ChEBI" id="CHEBI:30616"/>
    </ligand>
</feature>
<feature type="binding site" evidence="1">
    <location>
        <position position="115"/>
    </location>
    <ligand>
        <name>ATP</name>
        <dbReference type="ChEBI" id="CHEBI:30616"/>
    </ligand>
</feature>
<feature type="binding site" evidence="1">
    <location>
        <position position="127"/>
    </location>
    <ligand>
        <name>ATP</name>
        <dbReference type="ChEBI" id="CHEBI:30616"/>
    </ligand>
</feature>
<feature type="binding site" evidence="1">
    <location>
        <position position="128"/>
    </location>
    <ligand>
        <name>ATP</name>
        <dbReference type="ChEBI" id="CHEBI:30616"/>
    </ligand>
</feature>
<feature type="binding site" evidence="1">
    <location>
        <position position="178"/>
    </location>
    <ligand>
        <name>ATP</name>
        <dbReference type="ChEBI" id="CHEBI:30616"/>
    </ligand>
</feature>
<feature type="binding site" evidence="1">
    <location>
        <position position="185"/>
    </location>
    <ligand>
        <name>ATP</name>
        <dbReference type="ChEBI" id="CHEBI:30616"/>
    </ligand>
</feature>
<feature type="binding site" evidence="1">
    <location>
        <position position="259"/>
    </location>
    <ligand>
        <name>Mg(2+)</name>
        <dbReference type="ChEBI" id="CHEBI:18420"/>
    </ligand>
</feature>
<feature type="binding site" evidence="1">
    <location>
        <position position="268"/>
    </location>
    <ligand>
        <name>ATP</name>
        <dbReference type="ChEBI" id="CHEBI:30616"/>
    </ligand>
</feature>
<feature type="binding site" evidence="1">
    <location>
        <position position="268"/>
    </location>
    <ligand>
        <name>Mg(2+)</name>
        <dbReference type="ChEBI" id="CHEBI:18420"/>
    </ligand>
</feature>
<sequence>MSVTSDAAVTLHSRFARELPELAIGWQAEPAPAPRLLVLNDALATELGLDADWLRSPDGIGLLLGTDVPEGATPVAQAYAGHQFGGYVPRLGDGRALLLGELTDVHGRTRDLHLKGSGRTPFARGGDGLAVVGPMLREYIVSEAMHALGIPTTRSLAVVATGRDVWRETKQPGAVLARVASSHLRVGSFQYAYQYATAAKDDEVLRRLADHAISRHHPQAAEADNPYLALFEAVVSAQASLLAQWMLVGFIHGVMNTDNMTIAGETIDYGPCAFMDTFDPATVFSSIDHGGRYAYGNQPAVAHWNLARFAETLLPLIAEDVDTAVDLVTAALGQFPQQFDTAWSTGMRTKLGLSARVDHTTATALVNDLLVLLQQTRTDYTSAFRDLGRVARGAQPSLPFTDEWLSRWRACDPDPDVMDRVNPVYIPRNHLVEDALTAATTGDLAPLATLMTALKTPFTERAGFEAHAAPAPEDFGPYRTFCGT</sequence>
<reference key="1">
    <citation type="submission" date="2006-10" db="EMBL/GenBank/DDBJ databases">
        <authorList>
            <person name="Fleischmann R.D."/>
            <person name="Dodson R.J."/>
            <person name="Haft D.H."/>
            <person name="Merkel J.S."/>
            <person name="Nelson W.C."/>
            <person name="Fraser C.M."/>
        </authorList>
    </citation>
    <scope>NUCLEOTIDE SEQUENCE [LARGE SCALE GENOMIC DNA]</scope>
    <source>
        <strain>ATCC 700084 / mc(2)155</strain>
    </source>
</reference>
<reference key="2">
    <citation type="journal article" date="2007" name="Genome Biol.">
        <title>Interrupted coding sequences in Mycobacterium smegmatis: authentic mutations or sequencing errors?</title>
        <authorList>
            <person name="Deshayes C."/>
            <person name="Perrodou E."/>
            <person name="Gallien S."/>
            <person name="Euphrasie D."/>
            <person name="Schaeffer C."/>
            <person name="Van-Dorsselaer A."/>
            <person name="Poch O."/>
            <person name="Lecompte O."/>
            <person name="Reyrat J.-M."/>
        </authorList>
    </citation>
    <scope>NUCLEOTIDE SEQUENCE [LARGE SCALE GENOMIC DNA]</scope>
    <source>
        <strain>ATCC 700084 / mc(2)155</strain>
    </source>
</reference>
<reference key="3">
    <citation type="journal article" date="2009" name="Genome Res.">
        <title>Ortho-proteogenomics: multiple proteomes investigation through orthology and a new MS-based protocol.</title>
        <authorList>
            <person name="Gallien S."/>
            <person name="Perrodou E."/>
            <person name="Carapito C."/>
            <person name="Deshayes C."/>
            <person name="Reyrat J.-M."/>
            <person name="Van Dorsselaer A."/>
            <person name="Poch O."/>
            <person name="Schaeffer C."/>
            <person name="Lecompte O."/>
        </authorList>
    </citation>
    <scope>NUCLEOTIDE SEQUENCE [LARGE SCALE GENOMIC DNA]</scope>
    <source>
        <strain>ATCC 700084 / mc(2)155</strain>
    </source>
</reference>